<keyword id="KW-1003">Cell membrane</keyword>
<keyword id="KW-0444">Lipid biosynthesis</keyword>
<keyword id="KW-0443">Lipid metabolism</keyword>
<keyword id="KW-0472">Membrane</keyword>
<keyword id="KW-0594">Phospholipid biosynthesis</keyword>
<keyword id="KW-1208">Phospholipid metabolism</keyword>
<keyword id="KW-1185">Reference proteome</keyword>
<keyword id="KW-0808">Transferase</keyword>
<keyword id="KW-0812">Transmembrane</keyword>
<keyword id="KW-1133">Transmembrane helix</keyword>
<sequence>MYYVIASLLGYIFGCIHGSQIVGKLKGINIKDGGVKNAGASNTTILLGWKYGIVVALIDIFKATAAIFLLLILLQGNAIPTQEQHIYIYLTALFVIIGHNYPITMQFSGGKGTASLVGALIAIDWRIALIGIGVLILFTIATDYLAVGVLSMYISFLITTYYIFGLAPFFIVVGLSVLSIYKHIENYKRIIGKEETKLSSMFGKKAS</sequence>
<reference key="1">
    <citation type="journal article" date="2002" name="Nucleic Acids Res.">
        <title>Genome sequence of Oceanobacillus iheyensis isolated from the Iheya Ridge and its unexpected adaptive capabilities to extreme environments.</title>
        <authorList>
            <person name="Takami H."/>
            <person name="Takaki Y."/>
            <person name="Uchiyama I."/>
        </authorList>
    </citation>
    <scope>NUCLEOTIDE SEQUENCE [LARGE SCALE GENOMIC DNA]</scope>
    <source>
        <strain>DSM 14371 / CIP 107618 / JCM 11309 / KCTC 3954 / HTE831</strain>
    </source>
</reference>
<feature type="chain" id="PRO_0000188415" description="Glycerol-3-phosphate acyltransferase 1">
    <location>
        <begin position="1"/>
        <end position="207"/>
    </location>
</feature>
<feature type="transmembrane region" description="Helical" evidence="1">
    <location>
        <begin position="3"/>
        <end position="23"/>
    </location>
</feature>
<feature type="transmembrane region" description="Helical" evidence="1">
    <location>
        <begin position="53"/>
        <end position="73"/>
    </location>
</feature>
<feature type="transmembrane region" description="Helical" evidence="1">
    <location>
        <begin position="85"/>
        <end position="105"/>
    </location>
</feature>
<feature type="transmembrane region" description="Helical" evidence="1">
    <location>
        <begin position="127"/>
        <end position="147"/>
    </location>
</feature>
<feature type="transmembrane region" description="Helical" evidence="1">
    <location>
        <begin position="154"/>
        <end position="174"/>
    </location>
</feature>
<organism>
    <name type="scientific">Oceanobacillus iheyensis (strain DSM 14371 / CIP 107618 / JCM 11309 / KCTC 3954 / HTE831)</name>
    <dbReference type="NCBI Taxonomy" id="221109"/>
    <lineage>
        <taxon>Bacteria</taxon>
        <taxon>Bacillati</taxon>
        <taxon>Bacillota</taxon>
        <taxon>Bacilli</taxon>
        <taxon>Bacillales</taxon>
        <taxon>Bacillaceae</taxon>
        <taxon>Oceanobacillus</taxon>
    </lineage>
</organism>
<name>PLSY1_OCEIH</name>
<evidence type="ECO:0000255" key="1">
    <source>
        <dbReference type="HAMAP-Rule" id="MF_01043"/>
    </source>
</evidence>
<gene>
    <name evidence="1" type="primary">plsY1</name>
    <name type="ordered locus">OB0563</name>
</gene>
<comment type="function">
    <text evidence="1">Catalyzes the transfer of an acyl group from acyl-phosphate (acyl-PO(4)) to glycerol-3-phosphate (G3P) to form lysophosphatidic acid (LPA). This enzyme utilizes acyl-phosphate as fatty acyl donor, but not acyl-CoA or acyl-ACP.</text>
</comment>
<comment type="catalytic activity">
    <reaction evidence="1">
        <text>an acyl phosphate + sn-glycerol 3-phosphate = a 1-acyl-sn-glycero-3-phosphate + phosphate</text>
        <dbReference type="Rhea" id="RHEA:34075"/>
        <dbReference type="ChEBI" id="CHEBI:43474"/>
        <dbReference type="ChEBI" id="CHEBI:57597"/>
        <dbReference type="ChEBI" id="CHEBI:57970"/>
        <dbReference type="ChEBI" id="CHEBI:59918"/>
        <dbReference type="EC" id="2.3.1.275"/>
    </reaction>
</comment>
<comment type="pathway">
    <text evidence="1">Lipid metabolism; phospholipid metabolism.</text>
</comment>
<comment type="subunit">
    <text evidence="1">Probably interacts with PlsX.</text>
</comment>
<comment type="subcellular location">
    <subcellularLocation>
        <location evidence="1">Cell membrane</location>
        <topology evidence="1">Multi-pass membrane protein</topology>
    </subcellularLocation>
</comment>
<comment type="similarity">
    <text evidence="1">Belongs to the PlsY family.</text>
</comment>
<dbReference type="EC" id="2.3.1.275" evidence="1"/>
<dbReference type="EMBL" id="BA000028">
    <property type="protein sequence ID" value="BAC12519.1"/>
    <property type="molecule type" value="Genomic_DNA"/>
</dbReference>
<dbReference type="RefSeq" id="WP_011064966.1">
    <property type="nucleotide sequence ID" value="NC_004193.1"/>
</dbReference>
<dbReference type="SMR" id="P59249"/>
<dbReference type="STRING" id="221109.gene:10732767"/>
<dbReference type="KEGG" id="oih:OB0563"/>
<dbReference type="eggNOG" id="COG0344">
    <property type="taxonomic scope" value="Bacteria"/>
</dbReference>
<dbReference type="HOGENOM" id="CLU_081254_4_0_9"/>
<dbReference type="OrthoDB" id="9777124at2"/>
<dbReference type="PhylomeDB" id="P59249"/>
<dbReference type="UniPathway" id="UPA00085"/>
<dbReference type="Proteomes" id="UP000000822">
    <property type="component" value="Chromosome"/>
</dbReference>
<dbReference type="GO" id="GO:0005886">
    <property type="term" value="C:plasma membrane"/>
    <property type="evidence" value="ECO:0007669"/>
    <property type="project" value="UniProtKB-SubCell"/>
</dbReference>
<dbReference type="GO" id="GO:0043772">
    <property type="term" value="F:acyl-phosphate glycerol-3-phosphate acyltransferase activity"/>
    <property type="evidence" value="ECO:0007669"/>
    <property type="project" value="UniProtKB-UniRule"/>
</dbReference>
<dbReference type="GO" id="GO:0008654">
    <property type="term" value="P:phospholipid biosynthetic process"/>
    <property type="evidence" value="ECO:0007669"/>
    <property type="project" value="UniProtKB-UniRule"/>
</dbReference>
<dbReference type="HAMAP" id="MF_01043">
    <property type="entry name" value="PlsY"/>
    <property type="match status" value="1"/>
</dbReference>
<dbReference type="InterPro" id="IPR003811">
    <property type="entry name" value="G3P_acylTferase_PlsY"/>
</dbReference>
<dbReference type="PANTHER" id="PTHR30309:SF0">
    <property type="entry name" value="GLYCEROL-3-PHOSPHATE ACYLTRANSFERASE-RELATED"/>
    <property type="match status" value="1"/>
</dbReference>
<dbReference type="PANTHER" id="PTHR30309">
    <property type="entry name" value="INNER MEMBRANE PROTEIN YGIH"/>
    <property type="match status" value="1"/>
</dbReference>
<dbReference type="Pfam" id="PF02660">
    <property type="entry name" value="G3P_acyltransf"/>
    <property type="match status" value="1"/>
</dbReference>
<dbReference type="SMART" id="SM01207">
    <property type="entry name" value="G3P_acyltransf"/>
    <property type="match status" value="1"/>
</dbReference>
<protein>
    <recommendedName>
        <fullName evidence="1">Glycerol-3-phosphate acyltransferase 1</fullName>
    </recommendedName>
    <alternativeName>
        <fullName evidence="1">Acyl-PO4 G3P acyltransferase 1</fullName>
    </alternativeName>
    <alternativeName>
        <fullName evidence="1">Acyl-phosphate--glycerol-3-phosphate acyltransferase 1</fullName>
    </alternativeName>
    <alternativeName>
        <fullName evidence="1">G3P acyltransferase 1</fullName>
        <shortName evidence="1">GPAT 1</shortName>
        <ecNumber evidence="1">2.3.1.275</ecNumber>
    </alternativeName>
    <alternativeName>
        <fullName evidence="1">Lysophosphatidic acid synthase 1</fullName>
        <shortName evidence="1">LPA synthase 1</shortName>
    </alternativeName>
</protein>
<accession>P59249</accession>
<proteinExistence type="inferred from homology"/>